<keyword id="KW-0002">3D-structure</keyword>
<keyword id="KW-1185">Reference proteome</keyword>
<accession>Q57587</accession>
<evidence type="ECO:0000305" key="1"/>
<evidence type="ECO:0007829" key="2">
    <source>
        <dbReference type="PDB" id="4JIX"/>
    </source>
</evidence>
<comment type="similarity">
    <text evidence="1">To M.jannaschii MJ1213 and A.aeolicus AA15.</text>
</comment>
<name>Y123_METJA</name>
<gene>
    <name type="ordered locus">MJ0123</name>
</gene>
<proteinExistence type="evidence at protein level"/>
<feature type="chain" id="PRO_0000106703" description="Uncharacterized protein MJ0123">
    <location>
        <begin position="1"/>
        <end position="110"/>
    </location>
</feature>
<feature type="helix" evidence="2">
    <location>
        <begin position="10"/>
        <end position="20"/>
    </location>
</feature>
<feature type="strand" evidence="2">
    <location>
        <begin position="28"/>
        <end position="32"/>
    </location>
</feature>
<feature type="strand" evidence="2">
    <location>
        <begin position="38"/>
        <end position="42"/>
    </location>
</feature>
<feature type="turn" evidence="2">
    <location>
        <begin position="43"/>
        <end position="46"/>
    </location>
</feature>
<feature type="strand" evidence="2">
    <location>
        <begin position="47"/>
        <end position="51"/>
    </location>
</feature>
<feature type="helix" evidence="2">
    <location>
        <begin position="52"/>
        <end position="57"/>
    </location>
</feature>
<feature type="helix" evidence="2">
    <location>
        <begin position="60"/>
        <end position="76"/>
    </location>
</feature>
<feature type="helix" evidence="2">
    <location>
        <begin position="83"/>
        <end position="89"/>
    </location>
</feature>
<feature type="turn" evidence="2">
    <location>
        <begin position="90"/>
        <end position="92"/>
    </location>
</feature>
<feature type="helix" evidence="2">
    <location>
        <begin position="95"/>
        <end position="109"/>
    </location>
</feature>
<reference key="1">
    <citation type="journal article" date="1996" name="Science">
        <title>Complete genome sequence of the methanogenic archaeon, Methanococcus jannaschii.</title>
        <authorList>
            <person name="Bult C.J."/>
            <person name="White O."/>
            <person name="Olsen G.J."/>
            <person name="Zhou L."/>
            <person name="Fleischmann R.D."/>
            <person name="Sutton G.G."/>
            <person name="Blake J.A."/>
            <person name="FitzGerald L.M."/>
            <person name="Clayton R.A."/>
            <person name="Gocayne J.D."/>
            <person name="Kerlavage A.R."/>
            <person name="Dougherty B.A."/>
            <person name="Tomb J.-F."/>
            <person name="Adams M.D."/>
            <person name="Reich C.I."/>
            <person name="Overbeek R."/>
            <person name="Kirkness E.F."/>
            <person name="Weinstock K.G."/>
            <person name="Merrick J.M."/>
            <person name="Glodek A."/>
            <person name="Scott J.L."/>
            <person name="Geoghagen N.S.M."/>
            <person name="Weidman J.F."/>
            <person name="Fuhrmann J.L."/>
            <person name="Nguyen D."/>
            <person name="Utterback T.R."/>
            <person name="Kelley J.M."/>
            <person name="Peterson J.D."/>
            <person name="Sadow P.W."/>
            <person name="Hanna M.C."/>
            <person name="Cotton M.D."/>
            <person name="Roberts K.M."/>
            <person name="Hurst M.A."/>
            <person name="Kaine B.P."/>
            <person name="Borodovsky M."/>
            <person name="Klenk H.-P."/>
            <person name="Fraser C.M."/>
            <person name="Smith H.O."/>
            <person name="Woese C.R."/>
            <person name="Venter J.C."/>
        </authorList>
    </citation>
    <scope>NUCLEOTIDE SEQUENCE [LARGE SCALE GENOMIC DNA]</scope>
    <source>
        <strain>ATCC 43067 / DSM 2661 / JAL-1 / JCM 10045 / NBRC 100440</strain>
    </source>
</reference>
<protein>
    <recommendedName>
        <fullName>Uncharacterized protein MJ0123</fullName>
    </recommendedName>
</protein>
<organism>
    <name type="scientific">Methanocaldococcus jannaschii (strain ATCC 43067 / DSM 2661 / JAL-1 / JCM 10045 / NBRC 100440)</name>
    <name type="common">Methanococcus jannaschii</name>
    <dbReference type="NCBI Taxonomy" id="243232"/>
    <lineage>
        <taxon>Archaea</taxon>
        <taxon>Methanobacteriati</taxon>
        <taxon>Methanobacteriota</taxon>
        <taxon>Methanomada group</taxon>
        <taxon>Methanococci</taxon>
        <taxon>Methanococcales</taxon>
        <taxon>Methanocaldococcaceae</taxon>
        <taxon>Methanocaldococcus</taxon>
    </lineage>
</organism>
<sequence length="110" mass="13187">MKINENKKDIKDIVNEILISLNINESINIEIKPMKQKIASFSFKTKTLRLNKYVVENFDEELLHYIILHELIHFKIKSINHGIKFENELRNYFSKNECDEIELKIIQKLI</sequence>
<dbReference type="EMBL" id="L77117">
    <property type="protein sequence ID" value="AAB98111.1"/>
    <property type="molecule type" value="Genomic_DNA"/>
</dbReference>
<dbReference type="PIR" id="C64315">
    <property type="entry name" value="C64315"/>
</dbReference>
<dbReference type="RefSeq" id="WP_010869616.1">
    <property type="nucleotide sequence ID" value="NC_000909.1"/>
</dbReference>
<dbReference type="PDB" id="4JIX">
    <property type="method" value="X-ray"/>
    <property type="resolution" value="2.00 A"/>
    <property type="chains" value="A/B=1-110"/>
</dbReference>
<dbReference type="PDBsum" id="4JIX"/>
<dbReference type="SMR" id="Q57587"/>
<dbReference type="STRING" id="243232.MJ_0123"/>
<dbReference type="MEROPS" id="M95.002"/>
<dbReference type="PaxDb" id="243232-MJ_0123"/>
<dbReference type="EnsemblBacteria" id="AAB98111">
    <property type="protein sequence ID" value="AAB98111"/>
    <property type="gene ID" value="MJ_0123"/>
</dbReference>
<dbReference type="GeneID" id="1450966"/>
<dbReference type="KEGG" id="mja:MJ_0123"/>
<dbReference type="eggNOG" id="arCOG02625">
    <property type="taxonomic scope" value="Archaea"/>
</dbReference>
<dbReference type="HOGENOM" id="CLU_2340025_0_0_2"/>
<dbReference type="InParanoid" id="Q57587"/>
<dbReference type="OrthoDB" id="308128at2157"/>
<dbReference type="EvolutionaryTrace" id="Q57587"/>
<dbReference type="Proteomes" id="UP000000805">
    <property type="component" value="Chromosome"/>
</dbReference>
<dbReference type="CDD" id="cd05843">
    <property type="entry name" value="Peptidase_M48_M56"/>
    <property type="match status" value="1"/>
</dbReference>
<dbReference type="Gene3D" id="3.30.2010.10">
    <property type="entry name" value="Metalloproteases ('zincins'), catalytic domain"/>
    <property type="match status" value="1"/>
</dbReference>
<dbReference type="InterPro" id="IPR002725">
    <property type="entry name" value="YgjP-like_metallopeptidase"/>
</dbReference>
<dbReference type="Pfam" id="PF01863">
    <property type="entry name" value="YgjP-like"/>
    <property type="match status" value="1"/>
</dbReference>